<organism>
    <name type="scientific">Human papillomavirus 37</name>
    <dbReference type="NCBI Taxonomy" id="37958"/>
    <lineage>
        <taxon>Viruses</taxon>
        <taxon>Monodnaviria</taxon>
        <taxon>Shotokuvirae</taxon>
        <taxon>Cossaviricota</taxon>
        <taxon>Papovaviricetes</taxon>
        <taxon>Zurhausenvirales</taxon>
        <taxon>Papillomaviridae</taxon>
        <taxon>Firstpapillomavirinae</taxon>
        <taxon>Betapapillomavirus</taxon>
        <taxon>Betapapillomavirus 2</taxon>
    </lineage>
</organism>
<keyword id="KW-0067">ATP-binding</keyword>
<keyword id="KW-0235">DNA replication</keyword>
<keyword id="KW-0238">DNA-binding</keyword>
<keyword id="KW-0244">Early protein</keyword>
<keyword id="KW-0347">Helicase</keyword>
<keyword id="KW-1048">Host nucleus</keyword>
<keyword id="KW-0378">Hydrolase</keyword>
<keyword id="KW-0413">Isomerase</keyword>
<keyword id="KW-1017">Isopeptide bond</keyword>
<keyword id="KW-0547">Nucleotide-binding</keyword>
<keyword id="KW-0597">Phosphoprotein</keyword>
<keyword id="KW-0832">Ubl conjugation</keyword>
<feature type="chain" id="PRO_0000133135" description="Replication protein E1">
    <location>
        <begin position="1"/>
        <end position="609"/>
    </location>
</feature>
<feature type="domain" description="SF3 helicase" evidence="1">
    <location>
        <begin position="411"/>
        <end position="561"/>
    </location>
</feature>
<feature type="region of interest" description="DNA-binding region" evidence="1">
    <location>
        <begin position="149"/>
        <end position="312"/>
    </location>
</feature>
<feature type="region of interest" description="Disordered" evidence="2">
    <location>
        <begin position="584"/>
        <end position="609"/>
    </location>
</feature>
<feature type="short sequence motif" description="Nuclear localization signal" evidence="1">
    <location>
        <begin position="81"/>
        <end position="83"/>
    </location>
</feature>
<feature type="short sequence motif" description="Nuclear export signal" evidence="1">
    <location>
        <begin position="93"/>
        <end position="102"/>
    </location>
</feature>
<feature type="binding site" evidence="1">
    <location>
        <begin position="437"/>
        <end position="444"/>
    </location>
    <ligand>
        <name>ATP</name>
        <dbReference type="ChEBI" id="CHEBI:30616"/>
    </ligand>
</feature>
<feature type="modified residue" description="Phosphoserine; by host" evidence="1">
    <location>
        <position position="87"/>
    </location>
</feature>
<feature type="modified residue" description="Phosphoserine; by host" evidence="1">
    <location>
        <position position="94"/>
    </location>
</feature>
<feature type="cross-link" description="Glycyl lysine isopeptide (Lys-Gly) (interchain with G-Cter in SUMO)" evidence="1">
    <location>
        <position position="518"/>
    </location>
</feature>
<proteinExistence type="inferred from homology"/>
<name>VE1_HPV37</name>
<protein>
    <recommendedName>
        <fullName evidence="1">Replication protein E1</fullName>
        <ecNumber evidence="1">5.6.2.4</ecNumber>
    </recommendedName>
    <alternativeName>
        <fullName evidence="1">ATP-dependent helicase E1</fullName>
    </alternativeName>
    <alternativeName>
        <fullName evidence="1">DNA 3'-5' helicase E1</fullName>
    </alternativeName>
</protein>
<dbReference type="EC" id="5.6.2.4" evidence="1"/>
<dbReference type="EMBL" id="U31786">
    <property type="protein sequence ID" value="AAA79445.1"/>
    <property type="molecule type" value="Genomic_DNA"/>
</dbReference>
<dbReference type="SMR" id="Q80902"/>
<dbReference type="Proteomes" id="UP000009119">
    <property type="component" value="Genome"/>
</dbReference>
<dbReference type="GO" id="GO:0042025">
    <property type="term" value="C:host cell nucleus"/>
    <property type="evidence" value="ECO:0007669"/>
    <property type="project" value="UniProtKB-SubCell"/>
</dbReference>
<dbReference type="GO" id="GO:0005524">
    <property type="term" value="F:ATP binding"/>
    <property type="evidence" value="ECO:0007669"/>
    <property type="project" value="UniProtKB-UniRule"/>
</dbReference>
<dbReference type="GO" id="GO:0016887">
    <property type="term" value="F:ATP hydrolysis activity"/>
    <property type="evidence" value="ECO:0007669"/>
    <property type="project" value="RHEA"/>
</dbReference>
<dbReference type="GO" id="GO:0003677">
    <property type="term" value="F:DNA binding"/>
    <property type="evidence" value="ECO:0007669"/>
    <property type="project" value="UniProtKB-UniRule"/>
</dbReference>
<dbReference type="GO" id="GO:0003678">
    <property type="term" value="F:DNA helicase activity"/>
    <property type="evidence" value="ECO:0007669"/>
    <property type="project" value="UniProtKB-UniRule"/>
</dbReference>
<dbReference type="GO" id="GO:0006260">
    <property type="term" value="P:DNA replication"/>
    <property type="evidence" value="ECO:0007669"/>
    <property type="project" value="UniProtKB-UniRule"/>
</dbReference>
<dbReference type="Gene3D" id="3.40.1310.10">
    <property type="match status" value="1"/>
</dbReference>
<dbReference type="Gene3D" id="3.40.50.300">
    <property type="entry name" value="P-loop containing nucleotide triphosphate hydrolases"/>
    <property type="match status" value="1"/>
</dbReference>
<dbReference type="Gene3D" id="1.10.10.510">
    <property type="entry name" value="Zinc finger, large T-antigen D1 domain"/>
    <property type="match status" value="1"/>
</dbReference>
<dbReference type="HAMAP" id="MF_04000">
    <property type="entry name" value="PPV_E1"/>
    <property type="match status" value="1"/>
</dbReference>
<dbReference type="InterPro" id="IPR014015">
    <property type="entry name" value="Helicase_SF3_DNA-vir"/>
</dbReference>
<dbReference type="InterPro" id="IPR027417">
    <property type="entry name" value="P-loop_NTPase"/>
</dbReference>
<dbReference type="InterPro" id="IPR001177">
    <property type="entry name" value="PPV_DNA_helicase_E1_C"/>
</dbReference>
<dbReference type="InterPro" id="IPR014000">
    <property type="entry name" value="PPV_DNA_helicase_E1_N"/>
</dbReference>
<dbReference type="InterPro" id="IPR046832">
    <property type="entry name" value="PPV_E1_DBD"/>
</dbReference>
<dbReference type="InterPro" id="IPR046935">
    <property type="entry name" value="PPV_E1_DBD_sf"/>
</dbReference>
<dbReference type="InterPro" id="IPR016393">
    <property type="entry name" value="Rep_E1_papillomaV"/>
</dbReference>
<dbReference type="InterPro" id="IPR037102">
    <property type="entry name" value="Znf_lg_T-Ag_D1_dom_sf"/>
</dbReference>
<dbReference type="Pfam" id="PF00519">
    <property type="entry name" value="PPV_E1_C"/>
    <property type="match status" value="1"/>
</dbReference>
<dbReference type="Pfam" id="PF20450">
    <property type="entry name" value="PPV_E1_DBD"/>
    <property type="match status" value="1"/>
</dbReference>
<dbReference type="Pfam" id="PF00524">
    <property type="entry name" value="PPV_E1_N"/>
    <property type="match status" value="1"/>
</dbReference>
<dbReference type="PIRSF" id="PIRSF003383">
    <property type="entry name" value="Rep_E1_papillomaV"/>
    <property type="match status" value="1"/>
</dbReference>
<dbReference type="SUPFAM" id="SSF55464">
    <property type="entry name" value="Origin of replication-binding domain, RBD-like"/>
    <property type="match status" value="1"/>
</dbReference>
<dbReference type="SUPFAM" id="SSF52540">
    <property type="entry name" value="P-loop containing nucleoside triphosphate hydrolases"/>
    <property type="match status" value="1"/>
</dbReference>
<dbReference type="PROSITE" id="PS51206">
    <property type="entry name" value="SF3_HELICASE_1"/>
    <property type="match status" value="1"/>
</dbReference>
<accession>Q80902</accession>
<organismHost>
    <name type="scientific">Homo sapiens</name>
    <name type="common">Human</name>
    <dbReference type="NCBI Taxonomy" id="9606"/>
</organismHost>
<comment type="function">
    <text evidence="1">ATP-dependent DNA 3'-5' helicase required for initiation of viral DNA replication. It forms a complex with the viral E2 protein. The E1-E2 complex binds to the replication origin which contains binding sites for both proteins. During the initial step, a dimer of E1 interacts with a dimer of protein E2 leading to a complex that binds the viral origin of replication with high specificity. Then, a second dimer of E1 displaces the E2 dimer in an ATP-dependent manner to form the E1 tetramer. Following this, two E1 monomers are added to each half of the site, which results in the formation of two E1 trimers on the viral ori. Subsequently, two hexamers will be created. The double hexamer acts as a bi-directional helicase machinery and unwinds the viral DNA and then recruits the host DNA polymerase to start replication.</text>
</comment>
<comment type="catalytic activity">
    <reaction evidence="1">
        <text>Couples ATP hydrolysis with the unwinding of duplex DNA by translocating in the 3'-5' direction.</text>
        <dbReference type="EC" id="5.6.2.4"/>
    </reaction>
</comment>
<comment type="catalytic activity">
    <reaction evidence="1">
        <text>ATP + H2O = ADP + phosphate + H(+)</text>
        <dbReference type="Rhea" id="RHEA:13065"/>
        <dbReference type="ChEBI" id="CHEBI:15377"/>
        <dbReference type="ChEBI" id="CHEBI:15378"/>
        <dbReference type="ChEBI" id="CHEBI:30616"/>
        <dbReference type="ChEBI" id="CHEBI:43474"/>
        <dbReference type="ChEBI" id="CHEBI:456216"/>
        <dbReference type="EC" id="5.6.2.4"/>
    </reaction>
</comment>
<comment type="subunit">
    <text evidence="1">Can form hexamers. Interacts with E2 protein; this interaction increases E1 DNA binding specificity. Interacts with host DNA polymerase subunit POLA2. Interacts with host single stranded DNA-binding protein RPA1. Interacts with host TOP1; this interaction stimulates the enzymatic activity of TOP1.</text>
</comment>
<comment type="subcellular location">
    <subcellularLocation>
        <location evidence="1">Host nucleus</location>
    </subcellularLocation>
</comment>
<comment type="PTM">
    <text evidence="1">Phosphorylated.</text>
</comment>
<comment type="PTM">
    <text evidence="1">Sumoylated.</text>
</comment>
<comment type="similarity">
    <text evidence="1">Belongs to the papillomaviridae E1 protein family.</text>
</comment>
<reference key="1">
    <citation type="submission" date="1995-10" db="EMBL/GenBank/DDBJ databases">
        <authorList>
            <person name="Delius H."/>
        </authorList>
    </citation>
    <scope>NUCLEOTIDE SEQUENCE [GENOMIC DNA]</scope>
</reference>
<evidence type="ECO:0000255" key="1">
    <source>
        <dbReference type="HAMAP-Rule" id="MF_04000"/>
    </source>
</evidence>
<evidence type="ECO:0000256" key="2">
    <source>
        <dbReference type="SAM" id="MobiDB-lite"/>
    </source>
</evidence>
<gene>
    <name evidence="1" type="primary">E1</name>
</gene>
<sequence>MTDDTKGTKFDPKEGCSDWFVLEAECSDNSLDGDLEKLFEEGNDTDISDLIDDEDTVQGNSRELLCQQQSEESEQQIHLLKRKYFSSQEILQLSPRLQSITISPQHKSKRRLFEGDSGLELSFNEAEDFTQQTLEVQEVSASGSEPADQGAKGLGIVKDLLKCSNVKAMLLAKFKEAFGVGFMELTRQYKSCKTCCRDWVVTLYAVQDELIESSKQLLLQHCAYIWLQHMPPMCLYLLCFNVGKSRETVFRLLMNLLQVAEVQILAEPPKLRSTLSALFWYKGSMNPNVYAHGEYPEWIMTQTMINHQSAEATQFDLSTMIQYAYDNDLINEDEIAYNYAKLADTDANARAFLQHNSQARFVRECALMVRYYKRGEMKDMSISAWIHNKMLVVEGEGHWSDIVKFVRFQDINFIRFLDVFKSFLHNTPKKNCLLFYGPPDTGKSMFTMSLIKVLKGKVLSFANYKSNFWLQPLADTKIALIDDVTHVCWDYIDQYLRNGLDGNFVCLDLKHRAPCQIKFPPLLLTSNMDIMKEERYRYLHSRVHAFAFPNKFPFDSNNKPQFRLTDQSWKSFFERLWKQLDLSDQEDEGDDGHTQRSFQCTAREPNGHL</sequence>